<sequence length="707" mass="80575">MEEEIRNIEENDGIRLTWNVWPAKGDATTKIPLACLYNIHQTADVLECEPIYCMSCNSVLNPHCNIDFGRQSWNCVICNNNTTLPSHARGITPDNLLPELLPQNSTVEYVLSRESVFPVVFFLIVDICTFDGERHTLLKDTLKVVLEKIPEDALVGFVKYGTNIELLELNAEQPRRTHLFSGRKEYTAEILKSLGGASKSESQIVGRFLRRKDECQELLYNMVESLERDPFPVLPAYKPVRCTGSAVSLAISLLETSFPDMAVKYLLFTQGPCTFGPGTVTPIKFKEKGRNEHLEENDPMYAGPARKFYTGLAERMNSVGHSLDILAATIVDVGICHMERLTGMTGGMLIMAQDFDRDIYISSCSKILDRSSEGCLVQGFNAKMHVKTSKNLEYKGVIGQGRSFGGSWRMGSMFPSTNISLLFDKKPDAKHGEFGYVQLITQYQRSDKRLLVKVTTFARMFTDSREDVIYGFDQEAVAVFQARFLLLKKYEEIKDCERMIDKNLIRFTKTFARYDKGEPSSLALPDSMAYYPNYMFFFRRSLLVQTGNNSPDETTYYSTLLYNQRVSDALKLIKPTLISYHYQGGVEAVEVDSKSLEPDVILVLDTFHNVVVWRGEYVAQWVREGYHEQAEYEFLKDILKSSEERARLLCNERLPTPQFCITEQNKSQQRILHHYVNPSGGGSIITENINYEKFEEALRRVVVFNSE</sequence>
<gene>
    <name type="primary">SEC23</name>
    <name type="ordered locus">ECU11_0790</name>
</gene>
<proteinExistence type="evidence at protein level"/>
<accession>Q8SQX2</accession>
<name>SEC23_ENCCU</name>
<dbReference type="EMBL" id="AL590450">
    <property type="protein sequence ID" value="CAD25989.1"/>
    <property type="molecule type" value="Genomic_DNA"/>
</dbReference>
<dbReference type="RefSeq" id="NP_586385.1">
    <property type="nucleotide sequence ID" value="NM_001042218.1"/>
</dbReference>
<dbReference type="SMR" id="Q8SQX2"/>
<dbReference type="FunCoup" id="Q8SQX2">
    <property type="interactions" value="157"/>
</dbReference>
<dbReference type="STRING" id="284813.Q8SQX2"/>
<dbReference type="GeneID" id="860038"/>
<dbReference type="KEGG" id="ecu:ECU11_0790"/>
<dbReference type="VEuPathDB" id="MicrosporidiaDB:ECU11_0790"/>
<dbReference type="HOGENOM" id="CLU_008658_3_0_1"/>
<dbReference type="InParanoid" id="Q8SQX2"/>
<dbReference type="OMA" id="LFHGERE"/>
<dbReference type="OrthoDB" id="10256289at2759"/>
<dbReference type="Proteomes" id="UP000000819">
    <property type="component" value="Chromosome XI"/>
</dbReference>
<dbReference type="GO" id="GO:0030127">
    <property type="term" value="C:COPII vesicle coat"/>
    <property type="evidence" value="ECO:0007669"/>
    <property type="project" value="InterPro"/>
</dbReference>
<dbReference type="GO" id="GO:0070971">
    <property type="term" value="C:endoplasmic reticulum exit site"/>
    <property type="evidence" value="ECO:0007669"/>
    <property type="project" value="TreeGrafter"/>
</dbReference>
<dbReference type="GO" id="GO:0005789">
    <property type="term" value="C:endoplasmic reticulum membrane"/>
    <property type="evidence" value="ECO:0007669"/>
    <property type="project" value="UniProtKB-SubCell"/>
</dbReference>
<dbReference type="GO" id="GO:0000139">
    <property type="term" value="C:Golgi membrane"/>
    <property type="evidence" value="ECO:0007669"/>
    <property type="project" value="UniProtKB-SubCell"/>
</dbReference>
<dbReference type="GO" id="GO:0005096">
    <property type="term" value="F:GTPase activator activity"/>
    <property type="evidence" value="ECO:0007669"/>
    <property type="project" value="TreeGrafter"/>
</dbReference>
<dbReference type="GO" id="GO:0008270">
    <property type="term" value="F:zinc ion binding"/>
    <property type="evidence" value="ECO:0007669"/>
    <property type="project" value="InterPro"/>
</dbReference>
<dbReference type="GO" id="GO:0090110">
    <property type="term" value="P:COPII-coated vesicle cargo loading"/>
    <property type="evidence" value="ECO:0007669"/>
    <property type="project" value="TreeGrafter"/>
</dbReference>
<dbReference type="GO" id="GO:0006886">
    <property type="term" value="P:intracellular protein transport"/>
    <property type="evidence" value="ECO:0007669"/>
    <property type="project" value="InterPro"/>
</dbReference>
<dbReference type="CDD" id="cd11287">
    <property type="entry name" value="Sec23_C"/>
    <property type="match status" value="1"/>
</dbReference>
<dbReference type="Gene3D" id="2.60.40.1670">
    <property type="entry name" value="beta-sandwich domain of Sec23/24"/>
    <property type="match status" value="1"/>
</dbReference>
<dbReference type="Gene3D" id="1.20.120.730">
    <property type="entry name" value="Sec23/Sec24 helical domain"/>
    <property type="match status" value="1"/>
</dbReference>
<dbReference type="Gene3D" id="3.40.20.10">
    <property type="entry name" value="Severin"/>
    <property type="match status" value="1"/>
</dbReference>
<dbReference type="Gene3D" id="3.40.50.410">
    <property type="entry name" value="von Willebrand factor, type A domain"/>
    <property type="match status" value="1"/>
</dbReference>
<dbReference type="Gene3D" id="2.30.30.380">
    <property type="entry name" value="Zn-finger domain of Sec23/24"/>
    <property type="match status" value="1"/>
</dbReference>
<dbReference type="InterPro" id="IPR029006">
    <property type="entry name" value="ADF-H/Gelsolin-like_dom_sf"/>
</dbReference>
<dbReference type="InterPro" id="IPR007123">
    <property type="entry name" value="Gelsolin-like_dom"/>
</dbReference>
<dbReference type="InterPro" id="IPR036180">
    <property type="entry name" value="Gelsolin-like_dom_sf"/>
</dbReference>
<dbReference type="InterPro" id="IPR037364">
    <property type="entry name" value="Sec23"/>
</dbReference>
<dbReference type="InterPro" id="IPR006900">
    <property type="entry name" value="Sec23/24_helical_dom"/>
</dbReference>
<dbReference type="InterPro" id="IPR036175">
    <property type="entry name" value="Sec23/24_helical_dom_sf"/>
</dbReference>
<dbReference type="InterPro" id="IPR006896">
    <property type="entry name" value="Sec23/24_trunk_dom"/>
</dbReference>
<dbReference type="InterPro" id="IPR012990">
    <property type="entry name" value="Sec23_24_beta_S"/>
</dbReference>
<dbReference type="InterPro" id="IPR037550">
    <property type="entry name" value="Sec23_C"/>
</dbReference>
<dbReference type="InterPro" id="IPR036465">
    <property type="entry name" value="vWFA_dom_sf"/>
</dbReference>
<dbReference type="InterPro" id="IPR006895">
    <property type="entry name" value="Znf_Sec23_Sec24"/>
</dbReference>
<dbReference type="InterPro" id="IPR036174">
    <property type="entry name" value="Znf_Sec23_Sec24_sf"/>
</dbReference>
<dbReference type="PANTHER" id="PTHR11141">
    <property type="entry name" value="PROTEIN TRANSPORT PROTEIN SEC23"/>
    <property type="match status" value="1"/>
</dbReference>
<dbReference type="PANTHER" id="PTHR11141:SF0">
    <property type="entry name" value="PROTEIN TRANSPORT PROTEIN SEC23"/>
    <property type="match status" value="1"/>
</dbReference>
<dbReference type="Pfam" id="PF00626">
    <property type="entry name" value="Gelsolin"/>
    <property type="match status" value="1"/>
</dbReference>
<dbReference type="Pfam" id="PF08033">
    <property type="entry name" value="Sec23_BS"/>
    <property type="match status" value="1"/>
</dbReference>
<dbReference type="Pfam" id="PF04815">
    <property type="entry name" value="Sec23_helical"/>
    <property type="match status" value="1"/>
</dbReference>
<dbReference type="Pfam" id="PF04811">
    <property type="entry name" value="Sec23_trunk"/>
    <property type="match status" value="1"/>
</dbReference>
<dbReference type="Pfam" id="PF04810">
    <property type="entry name" value="zf-Sec23_Sec24"/>
    <property type="match status" value="1"/>
</dbReference>
<dbReference type="SUPFAM" id="SSF81995">
    <property type="entry name" value="beta-sandwich domain of Sec23/24"/>
    <property type="match status" value="1"/>
</dbReference>
<dbReference type="SUPFAM" id="SSF82754">
    <property type="entry name" value="C-terminal, gelsolin-like domain of Sec23/24"/>
    <property type="match status" value="1"/>
</dbReference>
<dbReference type="SUPFAM" id="SSF81811">
    <property type="entry name" value="Helical domain of Sec23/24"/>
    <property type="match status" value="1"/>
</dbReference>
<dbReference type="SUPFAM" id="SSF53300">
    <property type="entry name" value="vWA-like"/>
    <property type="match status" value="1"/>
</dbReference>
<dbReference type="SUPFAM" id="SSF82919">
    <property type="entry name" value="Zn-finger domain of Sec23/24"/>
    <property type="match status" value="1"/>
</dbReference>
<keyword id="KW-0963">Cytoplasm</keyword>
<keyword id="KW-0968">Cytoplasmic vesicle</keyword>
<keyword id="KW-0256">Endoplasmic reticulum</keyword>
<keyword id="KW-0931">ER-Golgi transport</keyword>
<keyword id="KW-0333">Golgi apparatus</keyword>
<keyword id="KW-0472">Membrane</keyword>
<keyword id="KW-0479">Metal-binding</keyword>
<keyword id="KW-0653">Protein transport</keyword>
<keyword id="KW-1185">Reference proteome</keyword>
<keyword id="KW-0813">Transport</keyword>
<keyword id="KW-0862">Zinc</keyword>
<protein>
    <recommendedName>
        <fullName>Protein transport protein SEC23</fullName>
    </recommendedName>
</protein>
<organism>
    <name type="scientific">Encephalitozoon cuniculi (strain GB-M1)</name>
    <name type="common">Microsporidian parasite</name>
    <dbReference type="NCBI Taxonomy" id="284813"/>
    <lineage>
        <taxon>Eukaryota</taxon>
        <taxon>Fungi</taxon>
        <taxon>Fungi incertae sedis</taxon>
        <taxon>Microsporidia</taxon>
        <taxon>Unikaryonidae</taxon>
        <taxon>Encephalitozoon</taxon>
    </lineage>
</organism>
<reference key="1">
    <citation type="journal article" date="2001" name="Nature">
        <title>Genome sequence and gene compaction of the eukaryote parasite Encephalitozoon cuniculi.</title>
        <authorList>
            <person name="Katinka M.D."/>
            <person name="Duprat S."/>
            <person name="Cornillot E."/>
            <person name="Metenier G."/>
            <person name="Thomarat F."/>
            <person name="Prensier G."/>
            <person name="Barbe V."/>
            <person name="Peyretaillade E."/>
            <person name="Brottier P."/>
            <person name="Wincker P."/>
            <person name="Delbac F."/>
            <person name="El Alaoui H."/>
            <person name="Peyret P."/>
            <person name="Saurin W."/>
            <person name="Gouy M."/>
            <person name="Weissenbach J."/>
            <person name="Vivares C.P."/>
        </authorList>
    </citation>
    <scope>NUCLEOTIDE SEQUENCE [LARGE SCALE GENOMIC DNA]</scope>
    <source>
        <strain>GB-M1</strain>
    </source>
</reference>
<reference key="2">
    <citation type="journal article" date="2006" name="Proteomics">
        <title>Proteomic analysis of the eukaryotic parasite Encephalitozoon cuniculi (microsporidia): a reference map for proteins expressed in late sporogonial stages.</title>
        <authorList>
            <person name="Brosson D."/>
            <person name="Kuhn L."/>
            <person name="Delbac F."/>
            <person name="Garin J."/>
            <person name="Vivares C.P."/>
            <person name="Texier C."/>
        </authorList>
    </citation>
    <scope>IDENTIFICATION BY MASS SPECTROMETRY [LARGE SCALE ANALYSIS]</scope>
    <scope>DEVELOPMENTAL STAGE</scope>
</reference>
<feature type="chain" id="PRO_0000383109" description="Protein transport protein SEC23">
    <location>
        <begin position="1"/>
        <end position="707"/>
    </location>
</feature>
<feature type="binding site" evidence="1">
    <location>
        <position position="53"/>
    </location>
    <ligand>
        <name>Zn(2+)</name>
        <dbReference type="ChEBI" id="CHEBI:29105"/>
    </ligand>
</feature>
<feature type="binding site" evidence="1">
    <location>
        <position position="56"/>
    </location>
    <ligand>
        <name>Zn(2+)</name>
        <dbReference type="ChEBI" id="CHEBI:29105"/>
    </ligand>
</feature>
<feature type="binding site" evidence="1">
    <location>
        <position position="75"/>
    </location>
    <ligand>
        <name>Zn(2+)</name>
        <dbReference type="ChEBI" id="CHEBI:29105"/>
    </ligand>
</feature>
<feature type="binding site" evidence="1">
    <location>
        <position position="78"/>
    </location>
    <ligand>
        <name>Zn(2+)</name>
        <dbReference type="ChEBI" id="CHEBI:29105"/>
    </ligand>
</feature>
<comment type="function">
    <text evidence="1">Component of the coat protein complex II (COPII) which promotes the formation of transport vesicles from the endoplasmic reticulum (ER). The coat has two main functions, the physical deformation of the endoplasmic reticulum membrane into vesicles and the selection of cargo molecules (By similarity).</text>
</comment>
<comment type="subunit">
    <text evidence="1">Component of the COPII coat.</text>
</comment>
<comment type="subcellular location">
    <subcellularLocation>
        <location evidence="1">Cytoplasm</location>
    </subcellularLocation>
    <subcellularLocation>
        <location evidence="1">Cytoplasmic vesicle</location>
        <location evidence="1">COPII-coated vesicle membrane</location>
        <topology evidence="1">Peripheral membrane protein</topology>
        <orientation evidence="1">Cytoplasmic side</orientation>
    </subcellularLocation>
    <subcellularLocation>
        <location evidence="1">Endoplasmic reticulum membrane</location>
        <topology evidence="1">Peripheral membrane protein</topology>
        <orientation evidence="1">Cytoplasmic side</orientation>
    </subcellularLocation>
    <subcellularLocation>
        <location evidence="1">Golgi apparatus membrane</location>
        <topology evidence="1">Peripheral membrane protein</topology>
        <orientation evidence="1">Cytoplasmic side</orientation>
    </subcellularLocation>
</comment>
<comment type="developmental stage">
    <text evidence="2">Expressed in late sporogonial stages.</text>
</comment>
<comment type="similarity">
    <text evidence="3">Belongs to the SEC23/SEC24 family. SEC23 subfamily.</text>
</comment>
<evidence type="ECO:0000250" key="1"/>
<evidence type="ECO:0000269" key="2">
    <source>
    </source>
</evidence>
<evidence type="ECO:0000305" key="3"/>